<name>MGSA_PSET1</name>
<protein>
    <recommendedName>
        <fullName evidence="1">Methylglyoxal synthase</fullName>
        <shortName evidence="1">MGS</shortName>
        <ecNumber evidence="1">4.2.3.3</ecNumber>
    </recommendedName>
</protein>
<comment type="function">
    <text evidence="1">Catalyzes the formation of methylglyoxal from dihydroxyacetone phosphate.</text>
</comment>
<comment type="catalytic activity">
    <reaction evidence="1">
        <text>dihydroxyacetone phosphate = methylglyoxal + phosphate</text>
        <dbReference type="Rhea" id="RHEA:17937"/>
        <dbReference type="ChEBI" id="CHEBI:17158"/>
        <dbReference type="ChEBI" id="CHEBI:43474"/>
        <dbReference type="ChEBI" id="CHEBI:57642"/>
        <dbReference type="EC" id="4.2.3.3"/>
    </reaction>
</comment>
<comment type="similarity">
    <text evidence="1">Belongs to the methylglyoxal synthase family.</text>
</comment>
<accession>Q3IES7</accession>
<sequence length="154" mass="17014">MDQKIQSLPAKKNIALVAHDGKKAALKLWCIKHLNALSEHTLYATGTTGHLINKTTGLDVIQLLSGPMGGDQQLGAKIAEHEIHMLVFFWDPLASQPHDPDVKALLRLAAVWNIPVACNEVSADMLLSSPLMNVELERTLPDYEKYLATRQIDI</sequence>
<reference key="1">
    <citation type="journal article" date="2005" name="Genome Res.">
        <title>Coping with cold: the genome of the versatile marine Antarctica bacterium Pseudoalteromonas haloplanktis TAC125.</title>
        <authorList>
            <person name="Medigue C."/>
            <person name="Krin E."/>
            <person name="Pascal G."/>
            <person name="Barbe V."/>
            <person name="Bernsel A."/>
            <person name="Bertin P.N."/>
            <person name="Cheung F."/>
            <person name="Cruveiller S."/>
            <person name="D'Amico S."/>
            <person name="Duilio A."/>
            <person name="Fang G."/>
            <person name="Feller G."/>
            <person name="Ho C."/>
            <person name="Mangenot S."/>
            <person name="Marino G."/>
            <person name="Nilsson J."/>
            <person name="Parrilli E."/>
            <person name="Rocha E.P.C."/>
            <person name="Rouy Z."/>
            <person name="Sekowska A."/>
            <person name="Tutino M.L."/>
            <person name="Vallenet D."/>
            <person name="von Heijne G."/>
            <person name="Danchin A."/>
        </authorList>
    </citation>
    <scope>NUCLEOTIDE SEQUENCE [LARGE SCALE GENOMIC DNA]</scope>
    <source>
        <strain>TAC 125</strain>
    </source>
</reference>
<evidence type="ECO:0000255" key="1">
    <source>
        <dbReference type="HAMAP-Rule" id="MF_00549"/>
    </source>
</evidence>
<organism>
    <name type="scientific">Pseudoalteromonas translucida (strain TAC 125)</name>
    <dbReference type="NCBI Taxonomy" id="326442"/>
    <lineage>
        <taxon>Bacteria</taxon>
        <taxon>Pseudomonadati</taxon>
        <taxon>Pseudomonadota</taxon>
        <taxon>Gammaproteobacteria</taxon>
        <taxon>Alteromonadales</taxon>
        <taxon>Pseudoalteromonadaceae</taxon>
        <taxon>Pseudoalteromonas</taxon>
    </lineage>
</organism>
<feature type="chain" id="PRO_1000017821" description="Methylglyoxal synthase">
    <location>
        <begin position="1"/>
        <end position="154"/>
    </location>
</feature>
<feature type="domain" description="MGS-like" evidence="1">
    <location>
        <begin position="6"/>
        <end position="154"/>
    </location>
</feature>
<feature type="active site" description="Proton donor/acceptor" evidence="1">
    <location>
        <position position="71"/>
    </location>
</feature>
<feature type="binding site" evidence="1">
    <location>
        <position position="19"/>
    </location>
    <ligand>
        <name>substrate</name>
    </ligand>
</feature>
<feature type="binding site" evidence="1">
    <location>
        <position position="23"/>
    </location>
    <ligand>
        <name>substrate</name>
    </ligand>
</feature>
<feature type="binding site" evidence="1">
    <location>
        <begin position="45"/>
        <end position="48"/>
    </location>
    <ligand>
        <name>substrate</name>
    </ligand>
</feature>
<feature type="binding site" evidence="1">
    <location>
        <begin position="65"/>
        <end position="66"/>
    </location>
    <ligand>
        <name>substrate</name>
    </ligand>
</feature>
<feature type="binding site" evidence="1">
    <location>
        <position position="98"/>
    </location>
    <ligand>
        <name>substrate</name>
    </ligand>
</feature>
<gene>
    <name evidence="1" type="primary">mgsA</name>
    <name type="ordered locus">PSHAa2175</name>
</gene>
<proteinExistence type="inferred from homology"/>
<keyword id="KW-0456">Lyase</keyword>
<keyword id="KW-1185">Reference proteome</keyword>
<dbReference type="EC" id="4.2.3.3" evidence="1"/>
<dbReference type="EMBL" id="CR954246">
    <property type="protein sequence ID" value="CAI87231.1"/>
    <property type="molecule type" value="Genomic_DNA"/>
</dbReference>
<dbReference type="SMR" id="Q3IES7"/>
<dbReference type="STRING" id="326442.PSHAa2175"/>
<dbReference type="KEGG" id="pha:PSHAa2175"/>
<dbReference type="eggNOG" id="COG1803">
    <property type="taxonomic scope" value="Bacteria"/>
</dbReference>
<dbReference type="HOGENOM" id="CLU_120420_0_1_6"/>
<dbReference type="BioCyc" id="PHAL326442:PSHA_RS10735-MONOMER"/>
<dbReference type="Proteomes" id="UP000006843">
    <property type="component" value="Chromosome I"/>
</dbReference>
<dbReference type="GO" id="GO:0005829">
    <property type="term" value="C:cytosol"/>
    <property type="evidence" value="ECO:0007669"/>
    <property type="project" value="TreeGrafter"/>
</dbReference>
<dbReference type="GO" id="GO:0008929">
    <property type="term" value="F:methylglyoxal synthase activity"/>
    <property type="evidence" value="ECO:0007669"/>
    <property type="project" value="UniProtKB-UniRule"/>
</dbReference>
<dbReference type="GO" id="GO:0019242">
    <property type="term" value="P:methylglyoxal biosynthetic process"/>
    <property type="evidence" value="ECO:0007669"/>
    <property type="project" value="UniProtKB-UniRule"/>
</dbReference>
<dbReference type="CDD" id="cd01422">
    <property type="entry name" value="MGS"/>
    <property type="match status" value="1"/>
</dbReference>
<dbReference type="Gene3D" id="3.40.50.1380">
    <property type="entry name" value="Methylglyoxal synthase-like domain"/>
    <property type="match status" value="1"/>
</dbReference>
<dbReference type="HAMAP" id="MF_00549">
    <property type="entry name" value="Methylglyoxal_synth"/>
    <property type="match status" value="1"/>
</dbReference>
<dbReference type="InterPro" id="IPR004363">
    <property type="entry name" value="Methylgl_synth"/>
</dbReference>
<dbReference type="InterPro" id="IPR018148">
    <property type="entry name" value="Methylglyoxal_synth_AS"/>
</dbReference>
<dbReference type="InterPro" id="IPR011607">
    <property type="entry name" value="MGS-like_dom"/>
</dbReference>
<dbReference type="InterPro" id="IPR036914">
    <property type="entry name" value="MGS-like_dom_sf"/>
</dbReference>
<dbReference type="NCBIfam" id="TIGR00160">
    <property type="entry name" value="MGSA"/>
    <property type="match status" value="1"/>
</dbReference>
<dbReference type="NCBIfam" id="NF003559">
    <property type="entry name" value="PRK05234.1"/>
    <property type="match status" value="1"/>
</dbReference>
<dbReference type="PANTHER" id="PTHR30492">
    <property type="entry name" value="METHYLGLYOXAL SYNTHASE"/>
    <property type="match status" value="1"/>
</dbReference>
<dbReference type="PANTHER" id="PTHR30492:SF0">
    <property type="entry name" value="METHYLGLYOXAL SYNTHASE"/>
    <property type="match status" value="1"/>
</dbReference>
<dbReference type="Pfam" id="PF02142">
    <property type="entry name" value="MGS"/>
    <property type="match status" value="1"/>
</dbReference>
<dbReference type="PIRSF" id="PIRSF006614">
    <property type="entry name" value="Methylglyox_syn"/>
    <property type="match status" value="1"/>
</dbReference>
<dbReference type="SMART" id="SM00851">
    <property type="entry name" value="MGS"/>
    <property type="match status" value="1"/>
</dbReference>
<dbReference type="SUPFAM" id="SSF52335">
    <property type="entry name" value="Methylglyoxal synthase-like"/>
    <property type="match status" value="1"/>
</dbReference>
<dbReference type="PROSITE" id="PS01335">
    <property type="entry name" value="METHYLGLYOXAL_SYNTH"/>
    <property type="match status" value="1"/>
</dbReference>
<dbReference type="PROSITE" id="PS51855">
    <property type="entry name" value="MGS"/>
    <property type="match status" value="1"/>
</dbReference>